<proteinExistence type="evidence at protein level"/>
<sequence>TLNKVYKFDRDRRFL</sequence>
<organism evidence="1">
    <name type="scientific">Ovis aries</name>
    <name type="common">Sheep</name>
    <dbReference type="NCBI Taxonomy" id="9940"/>
    <lineage>
        <taxon>Eukaryota</taxon>
        <taxon>Metazoa</taxon>
        <taxon>Chordata</taxon>
        <taxon>Craniata</taxon>
        <taxon>Vertebrata</taxon>
        <taxon>Euteleostomi</taxon>
        <taxon>Mammalia</taxon>
        <taxon>Eutheria</taxon>
        <taxon>Laurasiatheria</taxon>
        <taxon>Artiodactyla</taxon>
        <taxon>Ruminantia</taxon>
        <taxon>Pecora</taxon>
        <taxon>Bovidae</taxon>
        <taxon>Caprinae</taxon>
        <taxon>Ovis</taxon>
    </lineage>
</organism>
<reference key="1">
    <citation type="journal article" date="2003" name="Mol. Reprod. Dev.">
        <title>Isolation and partial characterization of three pregnancy-associated glycoproteins from the ewe placenta.</title>
        <authorList>
            <person name="El Amiri B."/>
            <person name="Remy B."/>
            <person name="Sousa N.M."/>
            <person name="Joris B."/>
            <person name="Ottiers N.G."/>
            <person name="Perenyi Z."/>
            <person name="Mboko H.B."/>
            <person name="Beckers J.-F.M.P."/>
        </authorList>
    </citation>
    <scope>PROTEIN SEQUENCE</scope>
    <source>
        <tissue>Placenta</tissue>
    </source>
</reference>
<dbReference type="Proteomes" id="UP000002356">
    <property type="component" value="Unplaced"/>
</dbReference>
<dbReference type="GO" id="GO:0005576">
    <property type="term" value="C:extracellular region"/>
    <property type="evidence" value="ECO:0007669"/>
    <property type="project" value="UniProtKB-SubCell"/>
</dbReference>
<protein>
    <recommendedName>
        <fullName>Placental protein</fullName>
    </recommendedName>
</protein>
<feature type="chain" id="PRO_0000058453" description="Placental protein">
    <location>
        <begin position="1"/>
        <end position="15" status="greater than"/>
    </location>
</feature>
<feature type="non-terminal residue" evidence="1">
    <location>
        <position position="15"/>
    </location>
</feature>
<name>PLAC_SHEEP</name>
<keyword id="KW-0903">Direct protein sequencing</keyword>
<keyword id="KW-1185">Reference proteome</keyword>
<keyword id="KW-0964">Secreted</keyword>
<comment type="subcellular location">
    <subcellularLocation>
        <location>Secreted</location>
    </subcellularLocation>
</comment>
<accession>P83204</accession>
<evidence type="ECO:0000305" key="1"/>